<reference key="1">
    <citation type="journal article" date="2005" name="Proc. Natl. Acad. Sci. U.S.A.">
        <title>Whole genome sequence of Staphylococcus saprophyticus reveals the pathogenesis of uncomplicated urinary tract infection.</title>
        <authorList>
            <person name="Kuroda M."/>
            <person name="Yamashita A."/>
            <person name="Hirakawa H."/>
            <person name="Kumano M."/>
            <person name="Morikawa K."/>
            <person name="Higashide M."/>
            <person name="Maruyama A."/>
            <person name="Inose Y."/>
            <person name="Matoba K."/>
            <person name="Toh H."/>
            <person name="Kuhara S."/>
            <person name="Hattori M."/>
            <person name="Ohta T."/>
        </authorList>
    </citation>
    <scope>NUCLEOTIDE SEQUENCE [LARGE SCALE GENOMIC DNA]</scope>
    <source>
        <strain>ATCC 15305 / DSM 20229 / NCIMB 8711 / NCTC 7292 / S-41</strain>
    </source>
</reference>
<keyword id="KW-0349">Heme</keyword>
<keyword id="KW-0376">Hydrogen peroxide</keyword>
<keyword id="KW-0408">Iron</keyword>
<keyword id="KW-0479">Metal-binding</keyword>
<keyword id="KW-0560">Oxidoreductase</keyword>
<keyword id="KW-0575">Peroxidase</keyword>
<keyword id="KW-1185">Reference proteome</keyword>
<sequence>MSNNKKLTSLFGAPVSDRENSMTAGPRGPLLMQDWYFLEQMAHFDREVIPERRMHAKGSGAFGTFTVTNDITQYTSASIFSEVGKQTEMFARFSTVAGERGAADAERDIRGFALKFYTDEGNWDLVGNNTPVFFFRDPKLFASLNHAIKRDPRTNMRSAQNNWDFWTSLPEALHQVTILMTDRGIPKGFRNMHGFGSHTYSMYNDKGERVWVKFHHRTQQGIENLQPDEAARTIAEDRESSQRDLFEAIENKDYPKWKTYIQVMTEEQARNHKDNPFDLTKVWYKGDYPLIEVGEWELNRNPDNYFQDVEQAAFAPTNIVPGIDFSPDRMLQGRLFSYGDAQRYRLGVNHWQIPVNQPKGVGIENICPFSRDGQMRILDNNQGGSTHYYPNSEGAFEDQPEFKKPGLKVEGEAYEYDFREDDDNYFEQPGRLFRLQSKEQQERIFENTANEMQGTTLEVQHRHIRHCYKADSEYGKGVAKALGIDINDVDLEVKD</sequence>
<name>CATA_STAS1</name>
<gene>
    <name type="primary">katA</name>
    <name type="ordered locus">SSP1432</name>
</gene>
<evidence type="ECO:0000250" key="1"/>
<evidence type="ECO:0000255" key="2">
    <source>
        <dbReference type="PROSITE-ProRule" id="PRU10013"/>
    </source>
</evidence>
<evidence type="ECO:0000256" key="3">
    <source>
        <dbReference type="SAM" id="MobiDB-lite"/>
    </source>
</evidence>
<evidence type="ECO:0000305" key="4"/>
<dbReference type="EC" id="1.11.1.6"/>
<dbReference type="EMBL" id="AP008934">
    <property type="protein sequence ID" value="BAE18577.1"/>
    <property type="molecule type" value="Genomic_DNA"/>
</dbReference>
<dbReference type="RefSeq" id="WP_011303203.1">
    <property type="nucleotide sequence ID" value="NC_007350.1"/>
</dbReference>
<dbReference type="SMR" id="Q49XC1"/>
<dbReference type="GeneID" id="3615371"/>
<dbReference type="KEGG" id="ssp:SSP1432"/>
<dbReference type="PATRIC" id="fig|342451.11.peg.1436"/>
<dbReference type="eggNOG" id="COG0753">
    <property type="taxonomic scope" value="Bacteria"/>
</dbReference>
<dbReference type="HOGENOM" id="CLU_010645_2_0_9"/>
<dbReference type="OrthoDB" id="9760293at2"/>
<dbReference type="Proteomes" id="UP000006371">
    <property type="component" value="Chromosome"/>
</dbReference>
<dbReference type="GO" id="GO:0005737">
    <property type="term" value="C:cytoplasm"/>
    <property type="evidence" value="ECO:0007669"/>
    <property type="project" value="TreeGrafter"/>
</dbReference>
<dbReference type="GO" id="GO:0004096">
    <property type="term" value="F:catalase activity"/>
    <property type="evidence" value="ECO:0007669"/>
    <property type="project" value="UniProtKB-EC"/>
</dbReference>
<dbReference type="GO" id="GO:0020037">
    <property type="term" value="F:heme binding"/>
    <property type="evidence" value="ECO:0007669"/>
    <property type="project" value="InterPro"/>
</dbReference>
<dbReference type="GO" id="GO:0046872">
    <property type="term" value="F:metal ion binding"/>
    <property type="evidence" value="ECO:0007669"/>
    <property type="project" value="UniProtKB-KW"/>
</dbReference>
<dbReference type="GO" id="GO:0042744">
    <property type="term" value="P:hydrogen peroxide catabolic process"/>
    <property type="evidence" value="ECO:0007669"/>
    <property type="project" value="UniProtKB-KW"/>
</dbReference>
<dbReference type="GO" id="GO:0042542">
    <property type="term" value="P:response to hydrogen peroxide"/>
    <property type="evidence" value="ECO:0007669"/>
    <property type="project" value="TreeGrafter"/>
</dbReference>
<dbReference type="CDD" id="cd08156">
    <property type="entry name" value="catalase_clade_3"/>
    <property type="match status" value="1"/>
</dbReference>
<dbReference type="FunFam" id="2.40.180.10:FF:000001">
    <property type="entry name" value="Catalase"/>
    <property type="match status" value="1"/>
</dbReference>
<dbReference type="Gene3D" id="2.40.180.10">
    <property type="entry name" value="Catalase core domain"/>
    <property type="match status" value="1"/>
</dbReference>
<dbReference type="InterPro" id="IPR018028">
    <property type="entry name" value="Catalase"/>
</dbReference>
<dbReference type="InterPro" id="IPR040333">
    <property type="entry name" value="Catalase_3"/>
</dbReference>
<dbReference type="InterPro" id="IPR024708">
    <property type="entry name" value="Catalase_AS"/>
</dbReference>
<dbReference type="InterPro" id="IPR024711">
    <property type="entry name" value="Catalase_clade1/3"/>
</dbReference>
<dbReference type="InterPro" id="IPR011614">
    <property type="entry name" value="Catalase_core"/>
</dbReference>
<dbReference type="InterPro" id="IPR002226">
    <property type="entry name" value="Catalase_haem_BS"/>
</dbReference>
<dbReference type="InterPro" id="IPR010582">
    <property type="entry name" value="Catalase_immune_responsive"/>
</dbReference>
<dbReference type="InterPro" id="IPR020835">
    <property type="entry name" value="Catalase_sf"/>
</dbReference>
<dbReference type="PANTHER" id="PTHR11465">
    <property type="entry name" value="CATALASE"/>
    <property type="match status" value="1"/>
</dbReference>
<dbReference type="PANTHER" id="PTHR11465:SF61">
    <property type="entry name" value="CATALASE"/>
    <property type="match status" value="1"/>
</dbReference>
<dbReference type="Pfam" id="PF00199">
    <property type="entry name" value="Catalase"/>
    <property type="match status" value="1"/>
</dbReference>
<dbReference type="Pfam" id="PF06628">
    <property type="entry name" value="Catalase-rel"/>
    <property type="match status" value="1"/>
</dbReference>
<dbReference type="PIRSF" id="PIRSF038928">
    <property type="entry name" value="Catalase_clade1-3"/>
    <property type="match status" value="1"/>
</dbReference>
<dbReference type="PRINTS" id="PR00067">
    <property type="entry name" value="CATALASE"/>
</dbReference>
<dbReference type="SMART" id="SM01060">
    <property type="entry name" value="Catalase"/>
    <property type="match status" value="1"/>
</dbReference>
<dbReference type="SUPFAM" id="SSF56634">
    <property type="entry name" value="Heme-dependent catalase-like"/>
    <property type="match status" value="1"/>
</dbReference>
<dbReference type="PROSITE" id="PS00437">
    <property type="entry name" value="CATALASE_1"/>
    <property type="match status" value="1"/>
</dbReference>
<dbReference type="PROSITE" id="PS00438">
    <property type="entry name" value="CATALASE_2"/>
    <property type="match status" value="1"/>
</dbReference>
<dbReference type="PROSITE" id="PS51402">
    <property type="entry name" value="CATALASE_3"/>
    <property type="match status" value="1"/>
</dbReference>
<comment type="function">
    <text evidence="1">Decomposes hydrogen peroxide into water and oxygen; serves to protect cells from the toxic effects of hydrogen peroxide.</text>
</comment>
<comment type="catalytic activity">
    <reaction evidence="2">
        <text>2 H2O2 = O2 + 2 H2O</text>
        <dbReference type="Rhea" id="RHEA:20309"/>
        <dbReference type="ChEBI" id="CHEBI:15377"/>
        <dbReference type="ChEBI" id="CHEBI:15379"/>
        <dbReference type="ChEBI" id="CHEBI:16240"/>
        <dbReference type="EC" id="1.11.1.6"/>
    </reaction>
</comment>
<comment type="cofactor">
    <cofactor evidence="1">
        <name>heme</name>
        <dbReference type="ChEBI" id="CHEBI:30413"/>
    </cofactor>
</comment>
<comment type="subunit">
    <text evidence="1">Homodimer.</text>
</comment>
<comment type="similarity">
    <text evidence="4">Belongs to the catalase family.</text>
</comment>
<organism>
    <name type="scientific">Staphylococcus saprophyticus subsp. saprophyticus (strain ATCC 15305 / DSM 20229 / NCIMB 8711 / NCTC 7292 / S-41)</name>
    <dbReference type="NCBI Taxonomy" id="342451"/>
    <lineage>
        <taxon>Bacteria</taxon>
        <taxon>Bacillati</taxon>
        <taxon>Bacillota</taxon>
        <taxon>Bacilli</taxon>
        <taxon>Bacillales</taxon>
        <taxon>Staphylococcaceae</taxon>
        <taxon>Staphylococcus</taxon>
    </lineage>
</organism>
<proteinExistence type="inferred from homology"/>
<protein>
    <recommendedName>
        <fullName>Catalase</fullName>
        <ecNumber>1.11.1.6</ecNumber>
    </recommendedName>
</protein>
<accession>Q49XC1</accession>
<feature type="chain" id="PRO_0000085007" description="Catalase">
    <location>
        <begin position="1"/>
        <end position="495"/>
    </location>
</feature>
<feature type="region of interest" description="Disordered" evidence="3">
    <location>
        <begin position="1"/>
        <end position="25"/>
    </location>
</feature>
<feature type="active site" evidence="2">
    <location>
        <position position="55"/>
    </location>
</feature>
<feature type="active site" evidence="2">
    <location>
        <position position="128"/>
    </location>
</feature>
<feature type="binding site" description="axial binding residue" evidence="1">
    <location>
        <position position="338"/>
    </location>
    <ligand>
        <name>heme</name>
        <dbReference type="ChEBI" id="CHEBI:30413"/>
    </ligand>
    <ligandPart>
        <name>Fe</name>
        <dbReference type="ChEBI" id="CHEBI:18248"/>
    </ligandPart>
</feature>